<accession>B3QMU5</accession>
<organism>
    <name type="scientific">Chlorobaculum parvum (strain DSM 263 / NCIMB 8327)</name>
    <name type="common">Chlorobium vibrioforme subsp. thiosulfatophilum</name>
    <dbReference type="NCBI Taxonomy" id="517417"/>
    <lineage>
        <taxon>Bacteria</taxon>
        <taxon>Pseudomonadati</taxon>
        <taxon>Chlorobiota</taxon>
        <taxon>Chlorobiia</taxon>
        <taxon>Chlorobiales</taxon>
        <taxon>Chlorobiaceae</taxon>
        <taxon>Chlorobaculum</taxon>
    </lineage>
</organism>
<gene>
    <name evidence="1" type="primary">rsmA</name>
    <name evidence="1" type="synonym">ksgA</name>
    <name type="ordered locus">Cpar_0832</name>
</gene>
<comment type="function">
    <text evidence="1">Specifically dimethylates two adjacent adenosines (A1518 and A1519) in the loop of a conserved hairpin near the 3'-end of 16S rRNA in the 30S particle. May play a critical role in biogenesis of 30S subunits.</text>
</comment>
<comment type="catalytic activity">
    <reaction evidence="1">
        <text>adenosine(1518)/adenosine(1519) in 16S rRNA + 4 S-adenosyl-L-methionine = N(6)-dimethyladenosine(1518)/N(6)-dimethyladenosine(1519) in 16S rRNA + 4 S-adenosyl-L-homocysteine + 4 H(+)</text>
        <dbReference type="Rhea" id="RHEA:19609"/>
        <dbReference type="Rhea" id="RHEA-COMP:10232"/>
        <dbReference type="Rhea" id="RHEA-COMP:10233"/>
        <dbReference type="ChEBI" id="CHEBI:15378"/>
        <dbReference type="ChEBI" id="CHEBI:57856"/>
        <dbReference type="ChEBI" id="CHEBI:59789"/>
        <dbReference type="ChEBI" id="CHEBI:74411"/>
        <dbReference type="ChEBI" id="CHEBI:74493"/>
        <dbReference type="EC" id="2.1.1.182"/>
    </reaction>
</comment>
<comment type="subcellular location">
    <subcellularLocation>
        <location evidence="1">Cytoplasm</location>
    </subcellularLocation>
</comment>
<comment type="similarity">
    <text evidence="1">Belongs to the class I-like SAM-binding methyltransferase superfamily. rRNA adenine N(6)-methyltransferase family. RsmA subfamily.</text>
</comment>
<proteinExistence type="inferred from homology"/>
<protein>
    <recommendedName>
        <fullName evidence="1">Ribosomal RNA small subunit methyltransferase A</fullName>
        <ecNumber evidence="1">2.1.1.182</ecNumber>
    </recommendedName>
    <alternativeName>
        <fullName evidence="1">16S rRNA (adenine(1518)-N(6)/adenine(1519)-N(6))-dimethyltransferase</fullName>
    </alternativeName>
    <alternativeName>
        <fullName evidence="1">16S rRNA dimethyladenosine transferase</fullName>
    </alternativeName>
    <alternativeName>
        <fullName evidence="1">16S rRNA dimethylase</fullName>
    </alternativeName>
    <alternativeName>
        <fullName evidence="1">S-adenosylmethionine-6-N', N'-adenosyl(rRNA) dimethyltransferase</fullName>
    </alternativeName>
</protein>
<dbReference type="EC" id="2.1.1.182" evidence="1"/>
<dbReference type="EMBL" id="CP001099">
    <property type="protein sequence ID" value="ACF11248.1"/>
    <property type="molecule type" value="Genomic_DNA"/>
</dbReference>
<dbReference type="RefSeq" id="WP_012502081.1">
    <property type="nucleotide sequence ID" value="NC_011027.1"/>
</dbReference>
<dbReference type="SMR" id="B3QMU5"/>
<dbReference type="STRING" id="517417.Cpar_0832"/>
<dbReference type="KEGG" id="cpc:Cpar_0832"/>
<dbReference type="eggNOG" id="COG0030">
    <property type="taxonomic scope" value="Bacteria"/>
</dbReference>
<dbReference type="HOGENOM" id="CLU_041220_0_1_10"/>
<dbReference type="OrthoDB" id="9814755at2"/>
<dbReference type="Proteomes" id="UP000008811">
    <property type="component" value="Chromosome"/>
</dbReference>
<dbReference type="GO" id="GO:0005829">
    <property type="term" value="C:cytosol"/>
    <property type="evidence" value="ECO:0007669"/>
    <property type="project" value="TreeGrafter"/>
</dbReference>
<dbReference type="GO" id="GO:0052908">
    <property type="term" value="F:16S rRNA (adenine(1518)-N(6)/adenine(1519)-N(6))-dimethyltransferase activity"/>
    <property type="evidence" value="ECO:0007669"/>
    <property type="project" value="UniProtKB-EC"/>
</dbReference>
<dbReference type="GO" id="GO:0003723">
    <property type="term" value="F:RNA binding"/>
    <property type="evidence" value="ECO:0007669"/>
    <property type="project" value="UniProtKB-KW"/>
</dbReference>
<dbReference type="CDD" id="cd02440">
    <property type="entry name" value="AdoMet_MTases"/>
    <property type="match status" value="1"/>
</dbReference>
<dbReference type="Gene3D" id="1.10.8.100">
    <property type="entry name" value="Ribosomal RNA adenine dimethylase-like, domain 2"/>
    <property type="match status" value="1"/>
</dbReference>
<dbReference type="Gene3D" id="3.40.50.150">
    <property type="entry name" value="Vaccinia Virus protein VP39"/>
    <property type="match status" value="1"/>
</dbReference>
<dbReference type="HAMAP" id="MF_00607">
    <property type="entry name" value="16SrRNA_methyltr_A"/>
    <property type="match status" value="1"/>
</dbReference>
<dbReference type="InterPro" id="IPR001737">
    <property type="entry name" value="KsgA/Erm"/>
</dbReference>
<dbReference type="InterPro" id="IPR023165">
    <property type="entry name" value="rRNA_Ade_diMease-like_C"/>
</dbReference>
<dbReference type="InterPro" id="IPR020596">
    <property type="entry name" value="rRNA_Ade_Mease_Trfase_CS"/>
</dbReference>
<dbReference type="InterPro" id="IPR020598">
    <property type="entry name" value="rRNA_Ade_methylase_Trfase_N"/>
</dbReference>
<dbReference type="InterPro" id="IPR011530">
    <property type="entry name" value="rRNA_adenine_dimethylase"/>
</dbReference>
<dbReference type="InterPro" id="IPR029063">
    <property type="entry name" value="SAM-dependent_MTases_sf"/>
</dbReference>
<dbReference type="NCBIfam" id="TIGR00755">
    <property type="entry name" value="ksgA"/>
    <property type="match status" value="1"/>
</dbReference>
<dbReference type="PANTHER" id="PTHR11727">
    <property type="entry name" value="DIMETHYLADENOSINE TRANSFERASE"/>
    <property type="match status" value="1"/>
</dbReference>
<dbReference type="PANTHER" id="PTHR11727:SF7">
    <property type="entry name" value="DIMETHYLADENOSINE TRANSFERASE-RELATED"/>
    <property type="match status" value="1"/>
</dbReference>
<dbReference type="Pfam" id="PF00398">
    <property type="entry name" value="RrnaAD"/>
    <property type="match status" value="1"/>
</dbReference>
<dbReference type="SMART" id="SM00650">
    <property type="entry name" value="rADc"/>
    <property type="match status" value="1"/>
</dbReference>
<dbReference type="SUPFAM" id="SSF53335">
    <property type="entry name" value="S-adenosyl-L-methionine-dependent methyltransferases"/>
    <property type="match status" value="1"/>
</dbReference>
<dbReference type="PROSITE" id="PS01131">
    <property type="entry name" value="RRNA_A_DIMETH"/>
    <property type="match status" value="1"/>
</dbReference>
<dbReference type="PROSITE" id="PS51689">
    <property type="entry name" value="SAM_RNA_A_N6_MT"/>
    <property type="match status" value="1"/>
</dbReference>
<keyword id="KW-0963">Cytoplasm</keyword>
<keyword id="KW-0489">Methyltransferase</keyword>
<keyword id="KW-0694">RNA-binding</keyword>
<keyword id="KW-0698">rRNA processing</keyword>
<keyword id="KW-0949">S-adenosyl-L-methionine</keyword>
<keyword id="KW-0808">Transferase</keyword>
<reference key="1">
    <citation type="submission" date="2008-06" db="EMBL/GenBank/DDBJ databases">
        <title>Complete sequence of Chlorobaculum parvum NCIB 8327.</title>
        <authorList>
            <consortium name="US DOE Joint Genome Institute"/>
            <person name="Lucas S."/>
            <person name="Copeland A."/>
            <person name="Lapidus A."/>
            <person name="Glavina del Rio T."/>
            <person name="Dalin E."/>
            <person name="Tice H."/>
            <person name="Bruce D."/>
            <person name="Goodwin L."/>
            <person name="Pitluck S."/>
            <person name="Schmutz J."/>
            <person name="Larimer F."/>
            <person name="Land M."/>
            <person name="Hauser L."/>
            <person name="Kyrpides N."/>
            <person name="Mikhailova N."/>
            <person name="Zhao F."/>
            <person name="Li T."/>
            <person name="Liu Z."/>
            <person name="Overmann J."/>
            <person name="Bryant D.A."/>
            <person name="Richardson P."/>
        </authorList>
    </citation>
    <scope>NUCLEOTIDE SEQUENCE [LARGE SCALE GENOMIC DNA]</scope>
    <source>
        <strain>DSM 263 / NCIMB 8327</strain>
    </source>
</reference>
<sequence length="274" mass="30952">MTKVEYKHTHIAAKKKLGQNFLLDKNIPRKIVRESGIKEGDLVLEIGPGFGALSTAILEVMPSFTAIEKDPELARFIREEHPEINLIEGDFLKVPLEPLTGSGKLAVLGNIPYSITSPILFRLLDNRHLIESATLMMQHEVAQRITAVPGTKEYGILAVQMQAFCDVKYLFKVGRAVFKPRPEVDSAVIRLVPKAQNPVEDSEGFRTFVRRAFHQRRKTLWNNLKEYYNTSEVPAETLKLRAEALTVEGLIELFEKLTPIDHALNDPETRNGIE</sequence>
<name>RSMA_CHLP8</name>
<feature type="chain" id="PRO_1000130257" description="Ribosomal RNA small subunit methyltransferase A">
    <location>
        <begin position="1"/>
        <end position="274"/>
    </location>
</feature>
<feature type="binding site" evidence="1">
    <location>
        <position position="20"/>
    </location>
    <ligand>
        <name>S-adenosyl-L-methionine</name>
        <dbReference type="ChEBI" id="CHEBI:59789"/>
    </ligand>
</feature>
<feature type="binding site" evidence="1">
    <location>
        <position position="22"/>
    </location>
    <ligand>
        <name>S-adenosyl-L-methionine</name>
        <dbReference type="ChEBI" id="CHEBI:59789"/>
    </ligand>
</feature>
<feature type="binding site" evidence="1">
    <location>
        <position position="47"/>
    </location>
    <ligand>
        <name>S-adenosyl-L-methionine</name>
        <dbReference type="ChEBI" id="CHEBI:59789"/>
    </ligand>
</feature>
<feature type="binding site" evidence="1">
    <location>
        <position position="68"/>
    </location>
    <ligand>
        <name>S-adenosyl-L-methionine</name>
        <dbReference type="ChEBI" id="CHEBI:59789"/>
    </ligand>
</feature>
<feature type="binding site" evidence="1">
    <location>
        <position position="90"/>
    </location>
    <ligand>
        <name>S-adenosyl-L-methionine</name>
        <dbReference type="ChEBI" id="CHEBI:59789"/>
    </ligand>
</feature>
<feature type="binding site" evidence="1">
    <location>
        <position position="110"/>
    </location>
    <ligand>
        <name>S-adenosyl-L-methionine</name>
        <dbReference type="ChEBI" id="CHEBI:59789"/>
    </ligand>
</feature>
<evidence type="ECO:0000255" key="1">
    <source>
        <dbReference type="HAMAP-Rule" id="MF_00607"/>
    </source>
</evidence>